<organism>
    <name type="scientific">Methanocaldococcus jannaschii (strain ATCC 43067 / DSM 2661 / JAL-1 / JCM 10045 / NBRC 100440)</name>
    <name type="common">Methanococcus jannaschii</name>
    <dbReference type="NCBI Taxonomy" id="243232"/>
    <lineage>
        <taxon>Archaea</taxon>
        <taxon>Methanobacteriati</taxon>
        <taxon>Methanobacteriota</taxon>
        <taxon>Methanomada group</taxon>
        <taxon>Methanococci</taxon>
        <taxon>Methanococcales</taxon>
        <taxon>Methanocaldococcaceae</taxon>
        <taxon>Methanocaldococcus</taxon>
    </lineage>
</organism>
<proteinExistence type="predicted"/>
<dbReference type="EMBL" id="L77117">
    <property type="protein sequence ID" value="AAB98486.1"/>
    <property type="molecule type" value="Genomic_DNA"/>
</dbReference>
<dbReference type="PIR" id="B64362">
    <property type="entry name" value="B64362"/>
</dbReference>
<dbReference type="STRING" id="243232.MJ_0498"/>
<dbReference type="PaxDb" id="243232-MJ_0498"/>
<dbReference type="EnsemblBacteria" id="AAB98486">
    <property type="protein sequence ID" value="AAB98486"/>
    <property type="gene ID" value="MJ_0498"/>
</dbReference>
<dbReference type="KEGG" id="mja:MJ_0498"/>
<dbReference type="eggNOG" id="arCOG04901">
    <property type="taxonomic scope" value="Archaea"/>
</dbReference>
<dbReference type="HOGENOM" id="CLU_132457_1_0_2"/>
<dbReference type="InParanoid" id="Q57921"/>
<dbReference type="PhylomeDB" id="Q57921"/>
<dbReference type="Proteomes" id="UP000000805">
    <property type="component" value="Chromosome"/>
</dbReference>
<dbReference type="InterPro" id="IPR012025">
    <property type="entry name" value="Methan_mark_6"/>
</dbReference>
<dbReference type="NCBIfam" id="TIGR03272">
    <property type="entry name" value="methan_mark_6"/>
    <property type="match status" value="1"/>
</dbReference>
<dbReference type="Pfam" id="PF09875">
    <property type="entry name" value="DUF2102"/>
    <property type="match status" value="1"/>
</dbReference>
<dbReference type="PIRSF" id="PIRSF005642">
    <property type="entry name" value="UCP005642"/>
    <property type="match status" value="1"/>
</dbReference>
<feature type="chain" id="PRO_0000106900" description="Uncharacterized protein MJ0498">
    <location>
        <begin position="1"/>
        <end position="156"/>
    </location>
</feature>
<gene>
    <name type="ordered locus">MJ0498</name>
</gene>
<protein>
    <recommendedName>
        <fullName>Uncharacterized protein MJ0498</fullName>
    </recommendedName>
</protein>
<sequence length="156" mass="17921">MMKKTKVIVLAENALTTPGKLVRYINTLNQPVIVKETCFGAYIEGEEELVDKLAQEIRNYERNRIFCKDRGYAIWDKRRCRAFRGGGPREGFHQLEAEQAVLDKIGLALDKIDKEGIKPMEEVLAKENELIKRETKIPVEEFKNIIEKVLGSKNEA</sequence>
<keyword id="KW-1185">Reference proteome</keyword>
<accession>Q57921</accession>
<name>Y498_METJA</name>
<reference key="1">
    <citation type="journal article" date="1996" name="Science">
        <title>Complete genome sequence of the methanogenic archaeon, Methanococcus jannaschii.</title>
        <authorList>
            <person name="Bult C.J."/>
            <person name="White O."/>
            <person name="Olsen G.J."/>
            <person name="Zhou L."/>
            <person name="Fleischmann R.D."/>
            <person name="Sutton G.G."/>
            <person name="Blake J.A."/>
            <person name="FitzGerald L.M."/>
            <person name="Clayton R.A."/>
            <person name="Gocayne J.D."/>
            <person name="Kerlavage A.R."/>
            <person name="Dougherty B.A."/>
            <person name="Tomb J.-F."/>
            <person name="Adams M.D."/>
            <person name="Reich C.I."/>
            <person name="Overbeek R."/>
            <person name="Kirkness E.F."/>
            <person name="Weinstock K.G."/>
            <person name="Merrick J.M."/>
            <person name="Glodek A."/>
            <person name="Scott J.L."/>
            <person name="Geoghagen N.S.M."/>
            <person name="Weidman J.F."/>
            <person name="Fuhrmann J.L."/>
            <person name="Nguyen D."/>
            <person name="Utterback T.R."/>
            <person name="Kelley J.M."/>
            <person name="Peterson J.D."/>
            <person name="Sadow P.W."/>
            <person name="Hanna M.C."/>
            <person name="Cotton M.D."/>
            <person name="Roberts K.M."/>
            <person name="Hurst M.A."/>
            <person name="Kaine B.P."/>
            <person name="Borodovsky M."/>
            <person name="Klenk H.-P."/>
            <person name="Fraser C.M."/>
            <person name="Smith H.O."/>
            <person name="Woese C.R."/>
            <person name="Venter J.C."/>
        </authorList>
    </citation>
    <scope>NUCLEOTIDE SEQUENCE [LARGE SCALE GENOMIC DNA]</scope>
    <source>
        <strain>ATCC 43067 / DSM 2661 / JAL-1 / JCM 10045 / NBRC 100440</strain>
    </source>
</reference>